<reference key="1">
    <citation type="journal article" date="1999" name="Nature">
        <title>Sequence and analysis of chromosome 4 of the plant Arabidopsis thaliana.</title>
        <authorList>
            <person name="Mayer K.F.X."/>
            <person name="Schueller C."/>
            <person name="Wambutt R."/>
            <person name="Murphy G."/>
            <person name="Volckaert G."/>
            <person name="Pohl T."/>
            <person name="Duesterhoeft A."/>
            <person name="Stiekema W."/>
            <person name="Entian K.-D."/>
            <person name="Terryn N."/>
            <person name="Harris B."/>
            <person name="Ansorge W."/>
            <person name="Brandt P."/>
            <person name="Grivell L.A."/>
            <person name="Rieger M."/>
            <person name="Weichselgartner M."/>
            <person name="de Simone V."/>
            <person name="Obermaier B."/>
            <person name="Mache R."/>
            <person name="Mueller M."/>
            <person name="Kreis M."/>
            <person name="Delseny M."/>
            <person name="Puigdomenech P."/>
            <person name="Watson M."/>
            <person name="Schmidtheini T."/>
            <person name="Reichert B."/>
            <person name="Portetelle D."/>
            <person name="Perez-Alonso M."/>
            <person name="Boutry M."/>
            <person name="Bancroft I."/>
            <person name="Vos P."/>
            <person name="Hoheisel J."/>
            <person name="Zimmermann W."/>
            <person name="Wedler H."/>
            <person name="Ridley P."/>
            <person name="Langham S.-A."/>
            <person name="McCullagh B."/>
            <person name="Bilham L."/>
            <person name="Robben J."/>
            <person name="van der Schueren J."/>
            <person name="Grymonprez B."/>
            <person name="Chuang Y.-J."/>
            <person name="Vandenbussche F."/>
            <person name="Braeken M."/>
            <person name="Weltjens I."/>
            <person name="Voet M."/>
            <person name="Bastiaens I."/>
            <person name="Aert R."/>
            <person name="Defoor E."/>
            <person name="Weitzenegger T."/>
            <person name="Bothe G."/>
            <person name="Ramsperger U."/>
            <person name="Hilbert H."/>
            <person name="Braun M."/>
            <person name="Holzer E."/>
            <person name="Brandt A."/>
            <person name="Peters S."/>
            <person name="van Staveren M."/>
            <person name="Dirkse W."/>
            <person name="Mooijman P."/>
            <person name="Klein Lankhorst R."/>
            <person name="Rose M."/>
            <person name="Hauf J."/>
            <person name="Koetter P."/>
            <person name="Berneiser S."/>
            <person name="Hempel S."/>
            <person name="Feldpausch M."/>
            <person name="Lamberth S."/>
            <person name="Van den Daele H."/>
            <person name="De Keyser A."/>
            <person name="Buysshaert C."/>
            <person name="Gielen J."/>
            <person name="Villarroel R."/>
            <person name="De Clercq R."/>
            <person name="van Montagu M."/>
            <person name="Rogers J."/>
            <person name="Cronin A."/>
            <person name="Quail M.A."/>
            <person name="Bray-Allen S."/>
            <person name="Clark L."/>
            <person name="Doggett J."/>
            <person name="Hall S."/>
            <person name="Kay M."/>
            <person name="Lennard N."/>
            <person name="McLay K."/>
            <person name="Mayes R."/>
            <person name="Pettett A."/>
            <person name="Rajandream M.A."/>
            <person name="Lyne M."/>
            <person name="Benes V."/>
            <person name="Rechmann S."/>
            <person name="Borkova D."/>
            <person name="Bloecker H."/>
            <person name="Scharfe M."/>
            <person name="Grimm M."/>
            <person name="Loehnert T.-H."/>
            <person name="Dose S."/>
            <person name="de Haan M."/>
            <person name="Maarse A.C."/>
            <person name="Schaefer M."/>
            <person name="Mueller-Auer S."/>
            <person name="Gabel C."/>
            <person name="Fuchs M."/>
            <person name="Fartmann B."/>
            <person name="Granderath K."/>
            <person name="Dauner D."/>
            <person name="Herzl A."/>
            <person name="Neumann S."/>
            <person name="Argiriou A."/>
            <person name="Vitale D."/>
            <person name="Liguori R."/>
            <person name="Piravandi E."/>
            <person name="Massenet O."/>
            <person name="Quigley F."/>
            <person name="Clabauld G."/>
            <person name="Muendlein A."/>
            <person name="Felber R."/>
            <person name="Schnabl S."/>
            <person name="Hiller R."/>
            <person name="Schmidt W."/>
            <person name="Lecharny A."/>
            <person name="Aubourg S."/>
            <person name="Chefdor F."/>
            <person name="Cooke R."/>
            <person name="Berger C."/>
            <person name="Monfort A."/>
            <person name="Casacuberta E."/>
            <person name="Gibbons T."/>
            <person name="Weber N."/>
            <person name="Vandenbol M."/>
            <person name="Bargues M."/>
            <person name="Terol J."/>
            <person name="Torres A."/>
            <person name="Perez-Perez A."/>
            <person name="Purnelle B."/>
            <person name="Bent E."/>
            <person name="Johnson S."/>
            <person name="Tacon D."/>
            <person name="Jesse T."/>
            <person name="Heijnen L."/>
            <person name="Schwarz S."/>
            <person name="Scholler P."/>
            <person name="Heber S."/>
            <person name="Francs P."/>
            <person name="Bielke C."/>
            <person name="Frishman D."/>
            <person name="Haase D."/>
            <person name="Lemcke K."/>
            <person name="Mewes H.-W."/>
            <person name="Stocker S."/>
            <person name="Zaccaria P."/>
            <person name="Bevan M."/>
            <person name="Wilson R.K."/>
            <person name="de la Bastide M."/>
            <person name="Habermann K."/>
            <person name="Parnell L."/>
            <person name="Dedhia N."/>
            <person name="Gnoj L."/>
            <person name="Schutz K."/>
            <person name="Huang E."/>
            <person name="Spiegel L."/>
            <person name="Sekhon M."/>
            <person name="Murray J."/>
            <person name="Sheet P."/>
            <person name="Cordes M."/>
            <person name="Abu-Threideh J."/>
            <person name="Stoneking T."/>
            <person name="Kalicki J."/>
            <person name="Graves T."/>
            <person name="Harmon G."/>
            <person name="Edwards J."/>
            <person name="Latreille P."/>
            <person name="Courtney L."/>
            <person name="Cloud J."/>
            <person name="Abbott A."/>
            <person name="Scott K."/>
            <person name="Johnson D."/>
            <person name="Minx P."/>
            <person name="Bentley D."/>
            <person name="Fulton B."/>
            <person name="Miller N."/>
            <person name="Greco T."/>
            <person name="Kemp K."/>
            <person name="Kramer J."/>
            <person name="Fulton L."/>
            <person name="Mardis E."/>
            <person name="Dante M."/>
            <person name="Pepin K."/>
            <person name="Hillier L.W."/>
            <person name="Nelson J."/>
            <person name="Spieth J."/>
            <person name="Ryan E."/>
            <person name="Andrews S."/>
            <person name="Geisel C."/>
            <person name="Layman D."/>
            <person name="Du H."/>
            <person name="Ali J."/>
            <person name="Berghoff A."/>
            <person name="Jones K."/>
            <person name="Drone K."/>
            <person name="Cotton M."/>
            <person name="Joshu C."/>
            <person name="Antonoiu B."/>
            <person name="Zidanic M."/>
            <person name="Strong C."/>
            <person name="Sun H."/>
            <person name="Lamar B."/>
            <person name="Yordan C."/>
            <person name="Ma P."/>
            <person name="Zhong J."/>
            <person name="Preston R."/>
            <person name="Vil D."/>
            <person name="Shekher M."/>
            <person name="Matero A."/>
            <person name="Shah R."/>
            <person name="Swaby I.K."/>
            <person name="O'Shaughnessy A."/>
            <person name="Rodriguez M."/>
            <person name="Hoffman J."/>
            <person name="Till S."/>
            <person name="Granat S."/>
            <person name="Shohdy N."/>
            <person name="Hasegawa A."/>
            <person name="Hameed A."/>
            <person name="Lodhi M."/>
            <person name="Johnson A."/>
            <person name="Chen E."/>
            <person name="Marra M.A."/>
            <person name="Martienssen R."/>
            <person name="McCombie W.R."/>
        </authorList>
    </citation>
    <scope>NUCLEOTIDE SEQUENCE [LARGE SCALE GENOMIC DNA]</scope>
    <source>
        <strain>cv. Columbia</strain>
    </source>
</reference>
<reference key="2">
    <citation type="journal article" date="2017" name="Plant J.">
        <title>Araport11: a complete reannotation of the Arabidopsis thaliana reference genome.</title>
        <authorList>
            <person name="Cheng C.Y."/>
            <person name="Krishnakumar V."/>
            <person name="Chan A.P."/>
            <person name="Thibaud-Nissen F."/>
            <person name="Schobel S."/>
            <person name="Town C.D."/>
        </authorList>
    </citation>
    <scope>GENOME REANNOTATION</scope>
    <source>
        <strain>cv. Columbia</strain>
    </source>
</reference>
<reference key="3">
    <citation type="journal article" date="2002" name="Trends Plant Sci.">
        <title>Mitogen-activated protein kinase cascades in plants: a new nomenclature.</title>
        <authorList>
            <consortium name="MAPK group"/>
        </authorList>
    </citation>
    <scope>NOMENCLATURE</scope>
</reference>
<reference key="4">
    <citation type="journal article" date="2010" name="Plant Physiol.">
        <title>iTILLING: a personalized approach to the identification of induced mutations in Arabidopsis.</title>
        <authorList>
            <person name="Bush S.M."/>
            <person name="Krysan P.J."/>
        </authorList>
    </citation>
    <scope>DISRUPTION PHENOTYPE</scope>
    <scope>MUTAGENESIS OF VAL-492; ALA-527; SER-538 AND LEU-557</scope>
</reference>
<reference key="5">
    <citation type="journal article" date="2012" name="Plant Cell">
        <title>The MEKK1-MKK1/MKK2-MPK4 kinase cascade negatively regulates immunity mediated by a mitogen-activated protein kinase kinase kinase in Arabidopsis.</title>
        <authorList>
            <person name="Kong Q."/>
            <person name="Qu N."/>
            <person name="Gao M."/>
            <person name="Zhang Z."/>
            <person name="Ding X."/>
            <person name="Yang F."/>
            <person name="Li Y."/>
            <person name="Dong O.X."/>
            <person name="Chen S."/>
            <person name="Li X."/>
            <person name="Zhang Y."/>
        </authorList>
    </citation>
    <scope>FUNCTION</scope>
    <scope>DISRUPTION PHENOTYPE</scope>
    <scope>MUTAGENESIS OF ARG-53; GLY-177; ASP-183; GLY-523; GLU-530; SER-602; GLY-611; ALA-628; GLY-644; ALA-665; GLU-667; GLY-687; GLY-715; PRO-740 AND ALA-746</scope>
    <scope>INTERACTION WITH MPK4</scope>
    <scope>PHOSPHORYLATION AT SER-79; SER-150; SER-365 AND SER-768 BY MAPK4</scope>
    <source>
        <strain>cv. Columbia</strain>
    </source>
</reference>
<reference key="6">
    <citation type="journal article" date="2013" name="Plant Cell">
        <title>Deletion of a tandem gene family in Arabidopsis: increased MEKK2 abundance triggers autoimmunity when the MEKK1-MKK1/2-MPK4 signaling cascade is disrupted.</title>
        <authorList>
            <person name="Su S.-H."/>
            <person name="Bush S.M."/>
            <person name="Zaman N."/>
            <person name="Stecker K."/>
            <person name="Sussman M.R."/>
            <person name="Krysan P."/>
        </authorList>
    </citation>
    <scope>FUNCTION</scope>
    <scope>DISRUPTION PHENOTYPE</scope>
    <scope>REGULATION BY MPK4</scope>
    <scope>IDENTIFICATION BY MASS SPECTROMETRY</scope>
    <scope>TISSUE SPECIFICITY</scope>
    <source>
        <strain>cv. Columbia</strain>
    </source>
</reference>
<reference key="7">
    <citation type="journal article" date="2013" name="Plant J.">
        <title>Glutamate signalling via a MEKK1 kinase-dependent pathway induces changes in Arabidopsis root architecture.</title>
        <authorList>
            <person name="Forde B.G."/>
            <person name="Cutler S.R."/>
            <person name="Zaman N."/>
            <person name="Krysan P.J."/>
        </authorList>
    </citation>
    <scope>FUNCTION</scope>
    <scope>DISRUPTION PHENOTYPE</scope>
</reference>
<evidence type="ECO:0000250" key="1">
    <source>
        <dbReference type="UniProtKB" id="P53778"/>
    </source>
</evidence>
<evidence type="ECO:0000250" key="2">
    <source>
        <dbReference type="UniProtKB" id="Q39008"/>
    </source>
</evidence>
<evidence type="ECO:0000255" key="3">
    <source>
        <dbReference type="PROSITE-ProRule" id="PRU00159"/>
    </source>
</evidence>
<evidence type="ECO:0000256" key="4">
    <source>
        <dbReference type="SAM" id="MobiDB-lite"/>
    </source>
</evidence>
<evidence type="ECO:0000269" key="5">
    <source>
    </source>
</evidence>
<evidence type="ECO:0000269" key="6">
    <source>
    </source>
</evidence>
<evidence type="ECO:0000269" key="7">
    <source>
    </source>
</evidence>
<evidence type="ECO:0000269" key="8">
    <source>
    </source>
</evidence>
<evidence type="ECO:0000303" key="9">
    <source>
    </source>
</evidence>
<evidence type="ECO:0000303" key="10">
    <source>
    </source>
</evidence>
<evidence type="ECO:0000305" key="11"/>
<evidence type="ECO:0000312" key="12">
    <source>
        <dbReference type="EMBL" id="AAC28188.1"/>
    </source>
</evidence>
<evidence type="ECO:0000312" key="13">
    <source>
        <dbReference type="EMBL" id="AEE82649.1"/>
    </source>
</evidence>
<evidence type="ECO:0000312" key="14">
    <source>
        <dbReference type="Proteomes" id="UP000006548"/>
    </source>
</evidence>
<proteinExistence type="evidence at protein level"/>
<protein>
    <recommendedName>
        <fullName evidence="10">Mitogen-activated protein kinase kinase kinase 9</fullName>
        <shortName evidence="10">MAP kinase kinase kinase 9</shortName>
        <ecNumber evidence="1">2.7.11.24</ecNumber>
    </recommendedName>
    <alternativeName>
        <fullName evidence="9">MAPK/ERK kinase kinase 2</fullName>
        <shortName evidence="9">AtMEKK2</shortName>
    </alternativeName>
    <alternativeName>
        <fullName evidence="10">Protein SUPPRESSOR OF MKK1 MKK2 1</fullName>
    </alternativeName>
</protein>
<accession>O81472</accession>
<name>MP3K2_ARATH</name>
<comment type="function">
    <text evidence="6 7 8">Triggers SUMM2-mediated immune responses, including cell death and defense responses. Probably inhibited by the MEKK1-MKK1/ MKK2-MPK4 kinase cascade to adjust plant defense (PubMed:22643122, PubMed:23695980). Seems to contribute in transducing external glutamate (L-Glu) signal that elicits large-scale changes in root architecture (PubMed:23574009).</text>
</comment>
<comment type="catalytic activity">
    <reaction evidence="1">
        <text>L-seryl-[protein] + ATP = O-phospho-L-seryl-[protein] + ADP + H(+)</text>
        <dbReference type="Rhea" id="RHEA:17989"/>
        <dbReference type="Rhea" id="RHEA-COMP:9863"/>
        <dbReference type="Rhea" id="RHEA-COMP:11604"/>
        <dbReference type="ChEBI" id="CHEBI:15378"/>
        <dbReference type="ChEBI" id="CHEBI:29999"/>
        <dbReference type="ChEBI" id="CHEBI:30616"/>
        <dbReference type="ChEBI" id="CHEBI:83421"/>
        <dbReference type="ChEBI" id="CHEBI:456216"/>
        <dbReference type="EC" id="2.7.11.24"/>
    </reaction>
</comment>
<comment type="catalytic activity">
    <reaction evidence="1">
        <text>L-threonyl-[protein] + ATP = O-phospho-L-threonyl-[protein] + ADP + H(+)</text>
        <dbReference type="Rhea" id="RHEA:46608"/>
        <dbReference type="Rhea" id="RHEA-COMP:11060"/>
        <dbReference type="Rhea" id="RHEA-COMP:11605"/>
        <dbReference type="ChEBI" id="CHEBI:15378"/>
        <dbReference type="ChEBI" id="CHEBI:30013"/>
        <dbReference type="ChEBI" id="CHEBI:30616"/>
        <dbReference type="ChEBI" id="CHEBI:61977"/>
        <dbReference type="ChEBI" id="CHEBI:456216"/>
        <dbReference type="EC" id="2.7.11.24"/>
    </reaction>
</comment>
<comment type="subunit">
    <text evidence="6">Interacts with MPK4.</text>
</comment>
<comment type="interaction">
    <interactant intactId="EBI-6271434">
        <id>O81472</id>
    </interactant>
    <interactant intactId="EBI-994375">
        <id>Q39024</id>
        <label>MPK4</label>
    </interactant>
    <organismsDiffer>false</organismsDiffer>
    <experiments>3</experiments>
</comment>
<comment type="tissue specificity">
    <text evidence="8">Expressed at least in rosette leaves (at protein level).</text>
</comment>
<comment type="induction">
    <text evidence="8">Down-regulated by MPK4.</text>
</comment>
<comment type="PTM">
    <text evidence="6">Phosphorylated by MPK4 upon treatment with flg22.</text>
</comment>
<comment type="disruption phenotype">
    <text evidence="5 6 7 8">No visible phenotype (PubMed:20668060, PubMed:23695980). Suppresses the cell death and defense responses not only in mkk1 mkk2 but also in mekk1 and mpk4 mutants (PubMed:22643122, PubMed:23695980). In the triple mutant mekk1 mekk2 mekk3, no apparent phenotype, but meek1-like dwarf phenotype when complemented by MEKK2 (PubMed:23695980). The triple mutant mekk1 mekk2 mekk3 is almost insensitive to external glutamate (L-Glu) on root growth (PubMed:23574009).</text>
</comment>
<comment type="similarity">
    <text evidence="11">Belongs to the protein kinase superfamily. STE Ser/Thr protein kinase family. MAP kinase kinase kinase subfamily.</text>
</comment>
<feature type="chain" id="PRO_0000434763" description="Mitogen-activated protein kinase kinase kinase 9">
    <location>
        <begin position="1"/>
        <end position="773"/>
    </location>
</feature>
<feature type="domain" description="Protein kinase" evidence="3">
    <location>
        <begin position="501"/>
        <end position="755"/>
    </location>
</feature>
<feature type="region of interest" description="Disordered" evidence="4">
    <location>
        <begin position="1"/>
        <end position="35"/>
    </location>
</feature>
<feature type="region of interest" description="Regulatory region" evidence="2">
    <location>
        <begin position="100"/>
        <end position="493"/>
    </location>
</feature>
<feature type="region of interest" description="Disordered" evidence="4">
    <location>
        <begin position="426"/>
        <end position="455"/>
    </location>
</feature>
<feature type="compositionally biased region" description="Basic and acidic residues" evidence="4">
    <location>
        <begin position="1"/>
        <end position="14"/>
    </location>
</feature>
<feature type="compositionally biased region" description="Low complexity" evidence="4">
    <location>
        <begin position="21"/>
        <end position="35"/>
    </location>
</feature>
<feature type="compositionally biased region" description="Acidic residues" evidence="4">
    <location>
        <begin position="440"/>
        <end position="449"/>
    </location>
</feature>
<feature type="active site" description="Proton acceptor" evidence="3">
    <location>
        <position position="624"/>
    </location>
</feature>
<feature type="binding site" evidence="3">
    <location>
        <begin position="507"/>
        <end position="515"/>
    </location>
    <ligand>
        <name>ATP</name>
        <dbReference type="ChEBI" id="CHEBI:30616"/>
    </ligand>
</feature>
<feature type="binding site" evidence="3">
    <location>
        <position position="529"/>
    </location>
    <ligand>
        <name>ATP</name>
        <dbReference type="ChEBI" id="CHEBI:30616"/>
    </ligand>
</feature>
<feature type="modified residue" description="Phosphoserine" evidence="6">
    <location>
        <position position="79"/>
    </location>
</feature>
<feature type="modified residue" description="Phosphoserine" evidence="6">
    <location>
        <position position="150"/>
    </location>
</feature>
<feature type="modified residue" description="Phosphoserine; by MAPK4" evidence="6">
    <location>
        <position position="365"/>
    </location>
</feature>
<feature type="modified residue" description="Phosphoserine" evidence="6">
    <location>
        <position position="768"/>
    </location>
</feature>
<feature type="mutagenesis site" description="In summ1-13; suppression of impaired plant defense responses in mkk1 mkk2, mekk1 and mpk4 mutants." evidence="6">
    <original>R</original>
    <variation>W</variation>
    <location>
        <position position="53"/>
    </location>
</feature>
<feature type="mutagenesis site" description="In summ1-9; suppression of impaired plant defense responses in mkk1 mkk2, mekk1 and mpk4 mutants." evidence="6">
    <original>G</original>
    <variation>D</variation>
    <location>
        <position position="177"/>
    </location>
</feature>
<feature type="mutagenesis site" description="In summ1-4; suppression of impaired plant defense responses in mkk1 mkk2, mekk1 and mpk4 mutants." evidence="6">
    <original>D</original>
    <variation>N</variation>
    <location>
        <position position="183"/>
    </location>
</feature>
<feature type="mutagenesis site" description="No obvious abnormal phenotype." evidence="5">
    <original>V</original>
    <variation>I</variation>
    <location>
        <position position="492"/>
    </location>
</feature>
<feature type="mutagenesis site" description="In summ1-3; suppression of impaired plant defense responses in mkk1 mkk2, mekk1 and mpk4 mutants." evidence="6">
    <original>G</original>
    <variation>E</variation>
    <location>
        <position position="523"/>
    </location>
</feature>
<feature type="mutagenesis site" description="No obvious abnormal phenotype." evidence="5">
    <original>A</original>
    <variation>T</variation>
    <location>
        <position position="527"/>
    </location>
</feature>
<feature type="mutagenesis site" description="In summ1-19; suppression of impaired plant defense responses in mkk1 mkk2, mekk1 and mpk4 mutants." evidence="6">
    <original>E</original>
    <variation>K</variation>
    <location>
        <position position="530"/>
    </location>
</feature>
<feature type="mutagenesis site" description="No obvious abnormal phenotype." evidence="5">
    <original>S</original>
    <variation>N</variation>
    <location>
        <position position="538"/>
    </location>
</feature>
<feature type="mutagenesis site" description="No obvious abnormal phenotype." evidence="5">
    <original>L</original>
    <variation>F</variation>
    <location>
        <position position="557"/>
    </location>
</feature>
<feature type="mutagenesis site" description="In summ1-7; suppression of impaired plant defense responses in mkk1 mkk2, mekk1 and mpk4 mutants." evidence="6">
    <original>S</original>
    <variation>F</variation>
    <location>
        <position position="602"/>
    </location>
</feature>
<feature type="mutagenesis site" description="In summ1-17; suppression of impaired plant defense responses in mkk1 mkk2, mekk1 and mpk4 mutants." evidence="6">
    <original>G</original>
    <variation>S</variation>
    <location>
        <position position="611"/>
    </location>
</feature>
<feature type="mutagenesis site" description="In summ1-16; suppression of impaired plant defense responses in mkk1 mkk2, mekk1 and mpk4 mutants." evidence="6">
    <original>A</original>
    <variation>T</variation>
    <location>
        <position position="628"/>
    </location>
</feature>
<feature type="mutagenesis site" description="In summ1-8; suppression of impaired plant defense responses in mkk1 mkk2, mekk1 and mpk4 mutants." evidence="6">
    <original>G</original>
    <variation>E</variation>
    <location>
        <position position="644"/>
    </location>
</feature>
<feature type="mutagenesis site" description="In summ1-18; suppression of impaired plant defense responses in mkk1 mkk2, mekk1 and mpk4 mutants." evidence="6">
    <original>A</original>
    <variation>T</variation>
    <location>
        <position position="665"/>
    </location>
</feature>
<feature type="mutagenesis site" description="In summ1-5; suppression of impaired plant defense responses in mkk1 mkk2, mekk1 and mpk4 mutants." evidence="6">
    <original>E</original>
    <variation>K</variation>
    <location>
        <position position="667"/>
    </location>
</feature>
<feature type="mutagenesis site" description="In summ1-12; suppression of impaired plant defense responses in mkk1 mkk2, mekk1 and mpk4 mutants." evidence="6">
    <original>G</original>
    <variation>R</variation>
    <location>
        <position position="687"/>
    </location>
</feature>
<feature type="mutagenesis site" description="In summ1-11; suppression of impaired plant defense responses in mkk1 mkk2, mekk1 and mpk4 mutants." evidence="6">
    <original>G</original>
    <variation>S</variation>
    <location>
        <position position="715"/>
    </location>
</feature>
<feature type="mutagenesis site" description="In summ1-2; suppression of impaired plant defense responses in mkk1 mkk2, mekk1 and mpk4 mutants." evidence="6">
    <original>P</original>
    <variation>L</variation>
    <location>
        <position position="740"/>
    </location>
</feature>
<feature type="mutagenesis site" description="In summ1-6; suppression of impaired plant defense responses in mkk1 mkk2, mekk1 and mpk4 mutants." evidence="6">
    <original>A</original>
    <variation>T</variation>
    <location>
        <position position="746"/>
    </location>
</feature>
<dbReference type="EC" id="2.7.11.24" evidence="1"/>
<dbReference type="EMBL" id="AF076275">
    <property type="protein sequence ID" value="AAC28188.1"/>
    <property type="molecule type" value="Genomic_DNA"/>
</dbReference>
<dbReference type="EMBL" id="AL161511">
    <property type="protein sequence ID" value="CAB77973.1"/>
    <property type="molecule type" value="Genomic_DNA"/>
</dbReference>
<dbReference type="EMBL" id="CP002687">
    <property type="protein sequence ID" value="AEE82649.1"/>
    <property type="molecule type" value="Genomic_DNA"/>
</dbReference>
<dbReference type="PIR" id="T01835">
    <property type="entry name" value="T01835"/>
</dbReference>
<dbReference type="RefSeq" id="NP_192588.1">
    <property type="nucleotide sequence ID" value="NM_116917.4"/>
</dbReference>
<dbReference type="SMR" id="O81472"/>
<dbReference type="FunCoup" id="O81472">
    <property type="interactions" value="889"/>
</dbReference>
<dbReference type="IntAct" id="O81472">
    <property type="interactions" value="1"/>
</dbReference>
<dbReference type="STRING" id="3702.O81472"/>
<dbReference type="iPTMnet" id="O81472"/>
<dbReference type="PaxDb" id="3702-AT4G08480.1"/>
<dbReference type="ProteomicsDB" id="239066"/>
<dbReference type="EnsemblPlants" id="AT4G08480.1">
    <property type="protein sequence ID" value="AT4G08480.1"/>
    <property type="gene ID" value="AT4G08480"/>
</dbReference>
<dbReference type="GeneID" id="826407"/>
<dbReference type="Gramene" id="AT4G08480.1">
    <property type="protein sequence ID" value="AT4G08480.1"/>
    <property type="gene ID" value="AT4G08480"/>
</dbReference>
<dbReference type="KEGG" id="ath:AT4G08480"/>
<dbReference type="Araport" id="AT4G08480"/>
<dbReference type="TAIR" id="AT4G08480">
    <property type="gene designation" value="MAPKKK9"/>
</dbReference>
<dbReference type="eggNOG" id="KOG0198">
    <property type="taxonomic scope" value="Eukaryota"/>
</dbReference>
<dbReference type="HOGENOM" id="CLU_000288_2_6_1"/>
<dbReference type="InParanoid" id="O81472"/>
<dbReference type="OMA" id="DPWEPAR"/>
<dbReference type="PhylomeDB" id="O81472"/>
<dbReference type="BRENDA" id="2.7.11.25">
    <property type="organism ID" value="399"/>
</dbReference>
<dbReference type="PRO" id="PR:O81472"/>
<dbReference type="Proteomes" id="UP000006548">
    <property type="component" value="Chromosome 4"/>
</dbReference>
<dbReference type="ExpressionAtlas" id="O81472">
    <property type="expression patterns" value="baseline and differential"/>
</dbReference>
<dbReference type="GO" id="GO:0005524">
    <property type="term" value="F:ATP binding"/>
    <property type="evidence" value="ECO:0007669"/>
    <property type="project" value="UniProtKB-KW"/>
</dbReference>
<dbReference type="GO" id="GO:0004707">
    <property type="term" value="F:MAP kinase activity"/>
    <property type="evidence" value="ECO:0007669"/>
    <property type="project" value="UniProtKB-EC"/>
</dbReference>
<dbReference type="GO" id="GO:0106310">
    <property type="term" value="F:protein serine kinase activity"/>
    <property type="evidence" value="ECO:0007669"/>
    <property type="project" value="RHEA"/>
</dbReference>
<dbReference type="GO" id="GO:0045087">
    <property type="term" value="P:innate immune response"/>
    <property type="evidence" value="ECO:0007669"/>
    <property type="project" value="UniProtKB-KW"/>
</dbReference>
<dbReference type="GO" id="GO:0031347">
    <property type="term" value="P:regulation of defense response"/>
    <property type="evidence" value="ECO:0000315"/>
    <property type="project" value="UniProtKB"/>
</dbReference>
<dbReference type="GO" id="GO:1902065">
    <property type="term" value="P:response to L-glutamate"/>
    <property type="evidence" value="ECO:0000315"/>
    <property type="project" value="UniProtKB"/>
</dbReference>
<dbReference type="GO" id="GO:0022622">
    <property type="term" value="P:root system development"/>
    <property type="evidence" value="ECO:0000315"/>
    <property type="project" value="UniProtKB"/>
</dbReference>
<dbReference type="FunFam" id="1.10.510.10:FF:000359">
    <property type="entry name" value="Mitogen-activated protein kinase 1, putative, expressed"/>
    <property type="match status" value="1"/>
</dbReference>
<dbReference type="Gene3D" id="1.10.510.10">
    <property type="entry name" value="Transferase(Phosphotransferase) domain 1"/>
    <property type="match status" value="1"/>
</dbReference>
<dbReference type="InterPro" id="IPR011009">
    <property type="entry name" value="Kinase-like_dom_sf"/>
</dbReference>
<dbReference type="InterPro" id="IPR050538">
    <property type="entry name" value="MAP_kinase_kinase_kinase"/>
</dbReference>
<dbReference type="InterPro" id="IPR000719">
    <property type="entry name" value="Prot_kinase_dom"/>
</dbReference>
<dbReference type="PANTHER" id="PTHR48016">
    <property type="entry name" value="MAP KINASE KINASE KINASE SSK2-RELATED-RELATED"/>
    <property type="match status" value="1"/>
</dbReference>
<dbReference type="PANTHER" id="PTHR48016:SF29">
    <property type="entry name" value="MITOGEN-ACTIVATED PROTEIN KINASE KINASE KINASE 1-RELATED"/>
    <property type="match status" value="1"/>
</dbReference>
<dbReference type="Pfam" id="PF00069">
    <property type="entry name" value="Pkinase"/>
    <property type="match status" value="1"/>
</dbReference>
<dbReference type="SUPFAM" id="SSF56112">
    <property type="entry name" value="Protein kinase-like (PK-like)"/>
    <property type="match status" value="1"/>
</dbReference>
<dbReference type="PROSITE" id="PS50011">
    <property type="entry name" value="PROTEIN_KINASE_DOM"/>
    <property type="match status" value="1"/>
</dbReference>
<keyword id="KW-0067">ATP-binding</keyword>
<keyword id="KW-0391">Immunity</keyword>
<keyword id="KW-0399">Innate immunity</keyword>
<keyword id="KW-0418">Kinase</keyword>
<keyword id="KW-0547">Nucleotide-binding</keyword>
<keyword id="KW-0597">Phosphoprotein</keyword>
<keyword id="KW-0611">Plant defense</keyword>
<keyword id="KW-1185">Reference proteome</keyword>
<keyword id="KW-0723">Serine/threonine-protein kinase</keyword>
<keyword id="KW-0808">Transferase</keyword>
<sequence>MKKSSDKSPVRQHDTATQINSDAVSSSTSFTDSDSTCSFLTPSMEFPDRISFRRIDFSEAAPTGVVLPSTSSELTRSNSSENKIPNEDISVSTSSRYLVFDKILALMKKSPGRRGDKTSPARRLDRSDAVRRNIDYDAGEDSSSLLITRSLDFPNRTSFRVDGVDDGEIDRIYQYIGVSGPEDFAISSDAWKARMEHERSSSDVVNKLKSLDLDSREAGPSGGVVASSSMNHKFQGHDLSEAGSIGVVVASNFTLSESNKIENLNSLRDKEIVDGDMVENRCGIERKPTILVKSRGYLVHNDDVGVGGGIKGVRPPVLNVPRADKEVVDGGTVESKSGIEWKPTILVKSKGYLVSNDGGIKGVTSPVLNLRPTDKEVVDSGTVENRRGIKGVRPSVLKPPPVMKLPPVDLPGSSWDILTHFAPDSEIVRRPSSSSSSENGCDEEEAEDDKVEKEETGDMFIQLEDTTDEACSFTTNEGDSSSTVSNTSPICVSGGSINTSWQKGQLLRQGSFGSVYEAISEDGDFFAVKEVSLLDQGSQAQECIQQLEGEIALLSQLEHQNILRYRGTDKDGSNLYIFLELVTQGSLLELYRRYQIRDSLISLYTKQILDGLKYLHHKGFIHRDIKCATILVDANGTVKLADFGLAKVSKLNDIKSRKETLFWMAPEVINRKDNDGYRSPADIWSLGCTVLEMCTGQIPYSDLEPVEALFRIRRGTLPEVPDTLSLDARHFILKCLKLNPEERPTATELLNHPFVRRPLPSSGSGSTSPLIRR</sequence>
<organism evidence="14">
    <name type="scientific">Arabidopsis thaliana</name>
    <name type="common">Mouse-ear cress</name>
    <dbReference type="NCBI Taxonomy" id="3702"/>
    <lineage>
        <taxon>Eukaryota</taxon>
        <taxon>Viridiplantae</taxon>
        <taxon>Streptophyta</taxon>
        <taxon>Embryophyta</taxon>
        <taxon>Tracheophyta</taxon>
        <taxon>Spermatophyta</taxon>
        <taxon>Magnoliopsida</taxon>
        <taxon>eudicotyledons</taxon>
        <taxon>Gunneridae</taxon>
        <taxon>Pentapetalae</taxon>
        <taxon>rosids</taxon>
        <taxon>malvids</taxon>
        <taxon>Brassicales</taxon>
        <taxon>Brassicaceae</taxon>
        <taxon>Camelineae</taxon>
        <taxon>Arabidopsis</taxon>
    </lineage>
</organism>
<gene>
    <name evidence="9" type="primary">MEKK2</name>
    <name evidence="10" type="synonym">MAPKKK9</name>
    <name evidence="10" type="synonym">SUMM1</name>
    <name evidence="13" type="ordered locus">At4g08480</name>
    <name evidence="12" type="ORF">T15F16.3</name>
</gene>